<dbReference type="EMBL" id="CP000758">
    <property type="protein sequence ID" value="ABS13233.1"/>
    <property type="molecule type" value="Genomic_DNA"/>
</dbReference>
<dbReference type="RefSeq" id="WP_012090783.1">
    <property type="nucleotide sequence ID" value="NC_009667.1"/>
</dbReference>
<dbReference type="SMR" id="A6WW79"/>
<dbReference type="STRING" id="439375.Oant_0502"/>
<dbReference type="KEGG" id="oan:Oant_0502"/>
<dbReference type="PATRIC" id="fig|439375.7.peg.536"/>
<dbReference type="eggNOG" id="COG0711">
    <property type="taxonomic scope" value="Bacteria"/>
</dbReference>
<dbReference type="HOGENOM" id="CLU_079215_1_2_5"/>
<dbReference type="PhylomeDB" id="A6WW79"/>
<dbReference type="Proteomes" id="UP000002301">
    <property type="component" value="Chromosome 1"/>
</dbReference>
<dbReference type="GO" id="GO:0005886">
    <property type="term" value="C:plasma membrane"/>
    <property type="evidence" value="ECO:0007669"/>
    <property type="project" value="UniProtKB-SubCell"/>
</dbReference>
<dbReference type="GO" id="GO:0045259">
    <property type="term" value="C:proton-transporting ATP synthase complex"/>
    <property type="evidence" value="ECO:0007669"/>
    <property type="project" value="UniProtKB-KW"/>
</dbReference>
<dbReference type="GO" id="GO:0046933">
    <property type="term" value="F:proton-transporting ATP synthase activity, rotational mechanism"/>
    <property type="evidence" value="ECO:0007669"/>
    <property type="project" value="UniProtKB-UniRule"/>
</dbReference>
<dbReference type="GO" id="GO:0046961">
    <property type="term" value="F:proton-transporting ATPase activity, rotational mechanism"/>
    <property type="evidence" value="ECO:0007669"/>
    <property type="project" value="TreeGrafter"/>
</dbReference>
<dbReference type="CDD" id="cd06503">
    <property type="entry name" value="ATP-synt_Fo_b"/>
    <property type="match status" value="1"/>
</dbReference>
<dbReference type="Gene3D" id="6.10.250.1580">
    <property type="match status" value="1"/>
</dbReference>
<dbReference type="HAMAP" id="MF_01398">
    <property type="entry name" value="ATP_synth_b_bprime"/>
    <property type="match status" value="1"/>
</dbReference>
<dbReference type="InterPro" id="IPR002146">
    <property type="entry name" value="ATP_synth_b/b'su_bac/chlpt"/>
</dbReference>
<dbReference type="InterPro" id="IPR050059">
    <property type="entry name" value="ATP_synthase_B_chain"/>
</dbReference>
<dbReference type="NCBIfam" id="NF006612">
    <property type="entry name" value="PRK09174.1"/>
    <property type="match status" value="1"/>
</dbReference>
<dbReference type="PANTHER" id="PTHR33445:SF1">
    <property type="entry name" value="ATP SYNTHASE SUBUNIT B"/>
    <property type="match status" value="1"/>
</dbReference>
<dbReference type="PANTHER" id="PTHR33445">
    <property type="entry name" value="ATP SYNTHASE SUBUNIT B', CHLOROPLASTIC"/>
    <property type="match status" value="1"/>
</dbReference>
<dbReference type="Pfam" id="PF00430">
    <property type="entry name" value="ATP-synt_B"/>
    <property type="match status" value="1"/>
</dbReference>
<comment type="function">
    <text evidence="1">F(1)F(0) ATP synthase produces ATP from ADP in the presence of a proton or sodium gradient. F-type ATPases consist of two structural domains, F(1) containing the extramembraneous catalytic core and F(0) containing the membrane proton channel, linked together by a central stalk and a peripheral stalk. During catalysis, ATP synthesis in the catalytic domain of F(1) is coupled via a rotary mechanism of the central stalk subunits to proton translocation.</text>
</comment>
<comment type="function">
    <text evidence="1">Component of the F(0) channel, it forms part of the peripheral stalk, linking F(1) to F(0).</text>
</comment>
<comment type="subunit">
    <text evidence="1">F-type ATPases have 2 components, F(1) - the catalytic core - and F(0) - the membrane proton channel. F(1) has five subunits: alpha(3), beta(3), gamma(1), delta(1), epsilon(1). F(0) has three main subunits: a(1), b(2) and c(10-14). The alpha and beta chains form an alternating ring which encloses part of the gamma chain. F(1) is attached to F(0) by a central stalk formed by the gamma and epsilon chains, while a peripheral stalk is formed by the delta and b chains.</text>
</comment>
<comment type="subcellular location">
    <subcellularLocation>
        <location evidence="1">Cell inner membrane</location>
        <topology evidence="1">Single-pass membrane protein</topology>
    </subcellularLocation>
</comment>
<comment type="similarity">
    <text evidence="1">Belongs to the ATPase B chain family.</text>
</comment>
<name>ATPF1_BRUA4</name>
<feature type="chain" id="PRO_0000368637" description="ATP synthase subunit b 1">
    <location>
        <begin position="1"/>
        <end position="205"/>
    </location>
</feature>
<feature type="transmembrane region" description="Helical" evidence="1">
    <location>
        <begin position="56"/>
        <end position="78"/>
    </location>
</feature>
<feature type="region of interest" description="Disordered" evidence="2">
    <location>
        <begin position="1"/>
        <end position="26"/>
    </location>
</feature>
<feature type="compositionally biased region" description="Polar residues" evidence="2">
    <location>
        <begin position="1"/>
        <end position="15"/>
    </location>
</feature>
<feature type="compositionally biased region" description="Low complexity" evidence="2">
    <location>
        <begin position="16"/>
        <end position="26"/>
    </location>
</feature>
<keyword id="KW-0066">ATP synthesis</keyword>
<keyword id="KW-0997">Cell inner membrane</keyword>
<keyword id="KW-1003">Cell membrane</keyword>
<keyword id="KW-0138">CF(0)</keyword>
<keyword id="KW-0375">Hydrogen ion transport</keyword>
<keyword id="KW-0406">Ion transport</keyword>
<keyword id="KW-0472">Membrane</keyword>
<keyword id="KW-1185">Reference proteome</keyword>
<keyword id="KW-0812">Transmembrane</keyword>
<keyword id="KW-1133">Transmembrane helix</keyword>
<keyword id="KW-0813">Transport</keyword>
<proteinExistence type="inferred from homology"/>
<evidence type="ECO:0000255" key="1">
    <source>
        <dbReference type="HAMAP-Rule" id="MF_01398"/>
    </source>
</evidence>
<evidence type="ECO:0000256" key="2">
    <source>
        <dbReference type="SAM" id="MobiDB-lite"/>
    </source>
</evidence>
<sequence>MFVSTAFAQTATESQPAPAAGEHGAADAVHTETGVANDAGHGSGVFPPFDSTHYASQILWLAITFGLFYLFMSRVVLPRIGGVIETRRDRIAQDLEQAARLKQDADNAIAAYEQELTQARTKAASIAEAAREKGKGEADAERATAEAALERKLKEAEERIAAIKAKAMNDVGNIAEETTAEIVEQLLGTKADKASVTAAVKASNA</sequence>
<organism>
    <name type="scientific">Brucella anthropi (strain ATCC 49188 / DSM 6882 / CCUG 24695 / JCM 21032 / LMG 3331 / NBRC 15819 / NCTC 12168 / Alc 37)</name>
    <name type="common">Ochrobactrum anthropi</name>
    <dbReference type="NCBI Taxonomy" id="439375"/>
    <lineage>
        <taxon>Bacteria</taxon>
        <taxon>Pseudomonadati</taxon>
        <taxon>Pseudomonadota</taxon>
        <taxon>Alphaproteobacteria</taxon>
        <taxon>Hyphomicrobiales</taxon>
        <taxon>Brucellaceae</taxon>
        <taxon>Brucella/Ochrobactrum group</taxon>
        <taxon>Brucella</taxon>
    </lineage>
</organism>
<protein>
    <recommendedName>
        <fullName evidence="1">ATP synthase subunit b 1</fullName>
    </recommendedName>
    <alternativeName>
        <fullName evidence="1">ATP synthase F(0) sector subunit b 1</fullName>
    </alternativeName>
    <alternativeName>
        <fullName evidence="1">ATPase subunit I 1</fullName>
    </alternativeName>
    <alternativeName>
        <fullName evidence="1">F-type ATPase subunit b 1</fullName>
        <shortName evidence="1">F-ATPase subunit b 1</shortName>
    </alternativeName>
</protein>
<accession>A6WW79</accession>
<reference key="1">
    <citation type="journal article" date="2011" name="J. Bacteriol.">
        <title>Genome of Ochrobactrum anthropi ATCC 49188 T, a versatile opportunistic pathogen and symbiont of several eukaryotic hosts.</title>
        <authorList>
            <person name="Chain P.S."/>
            <person name="Lang D.M."/>
            <person name="Comerci D.J."/>
            <person name="Malfatti S.A."/>
            <person name="Vergez L.M."/>
            <person name="Shin M."/>
            <person name="Ugalde R.A."/>
            <person name="Garcia E."/>
            <person name="Tolmasky M.E."/>
        </authorList>
    </citation>
    <scope>NUCLEOTIDE SEQUENCE [LARGE SCALE GENOMIC DNA]</scope>
    <source>
        <strain>ATCC 49188 / DSM 6882 / CCUG 24695 / JCM 21032 / LMG 3331 / NBRC 15819 / NCTC 12168 / Alc 37</strain>
    </source>
</reference>
<gene>
    <name evidence="1" type="primary">atpF1</name>
    <name type="ordered locus">Oant_0502</name>
</gene>